<comment type="function">
    <text evidence="1">Catalyzes the phosphorolysis of diverse nucleosides, yielding D-ribose 1-phosphate and the respective free bases. Can use uridine, adenosine, guanosine, cytidine, thymidine, inosine and xanthosine as substrates. Also catalyzes the reverse reactions.</text>
</comment>
<comment type="catalytic activity">
    <reaction evidence="1">
        <text>a purine D-ribonucleoside + phosphate = a purine nucleobase + alpha-D-ribose 1-phosphate</text>
        <dbReference type="Rhea" id="RHEA:19805"/>
        <dbReference type="ChEBI" id="CHEBI:26386"/>
        <dbReference type="ChEBI" id="CHEBI:43474"/>
        <dbReference type="ChEBI" id="CHEBI:57720"/>
        <dbReference type="ChEBI" id="CHEBI:142355"/>
        <dbReference type="EC" id="2.4.2.1"/>
    </reaction>
</comment>
<comment type="catalytic activity">
    <reaction evidence="1">
        <text>adenosine + phosphate = alpha-D-ribose 1-phosphate + adenine</text>
        <dbReference type="Rhea" id="RHEA:27642"/>
        <dbReference type="ChEBI" id="CHEBI:16335"/>
        <dbReference type="ChEBI" id="CHEBI:16708"/>
        <dbReference type="ChEBI" id="CHEBI:43474"/>
        <dbReference type="ChEBI" id="CHEBI:57720"/>
        <dbReference type="EC" id="2.4.2.1"/>
    </reaction>
</comment>
<comment type="catalytic activity">
    <reaction evidence="1">
        <text>cytidine + phosphate = cytosine + alpha-D-ribose 1-phosphate</text>
        <dbReference type="Rhea" id="RHEA:52540"/>
        <dbReference type="ChEBI" id="CHEBI:16040"/>
        <dbReference type="ChEBI" id="CHEBI:17562"/>
        <dbReference type="ChEBI" id="CHEBI:43474"/>
        <dbReference type="ChEBI" id="CHEBI:57720"/>
        <dbReference type="EC" id="2.4.2.2"/>
    </reaction>
</comment>
<comment type="catalytic activity">
    <reaction evidence="1">
        <text>guanosine + phosphate = alpha-D-ribose 1-phosphate + guanine</text>
        <dbReference type="Rhea" id="RHEA:13233"/>
        <dbReference type="ChEBI" id="CHEBI:16235"/>
        <dbReference type="ChEBI" id="CHEBI:16750"/>
        <dbReference type="ChEBI" id="CHEBI:43474"/>
        <dbReference type="ChEBI" id="CHEBI:57720"/>
        <dbReference type="EC" id="2.4.2.1"/>
    </reaction>
</comment>
<comment type="catalytic activity">
    <reaction evidence="1">
        <text>inosine + phosphate = alpha-D-ribose 1-phosphate + hypoxanthine</text>
        <dbReference type="Rhea" id="RHEA:27646"/>
        <dbReference type="ChEBI" id="CHEBI:17368"/>
        <dbReference type="ChEBI" id="CHEBI:17596"/>
        <dbReference type="ChEBI" id="CHEBI:43474"/>
        <dbReference type="ChEBI" id="CHEBI:57720"/>
        <dbReference type="EC" id="2.4.2.1"/>
    </reaction>
</comment>
<comment type="catalytic activity">
    <reaction evidence="1">
        <text>thymidine + phosphate = 2-deoxy-alpha-D-ribose 1-phosphate + thymine</text>
        <dbReference type="Rhea" id="RHEA:16037"/>
        <dbReference type="ChEBI" id="CHEBI:17748"/>
        <dbReference type="ChEBI" id="CHEBI:17821"/>
        <dbReference type="ChEBI" id="CHEBI:43474"/>
        <dbReference type="ChEBI" id="CHEBI:57259"/>
        <dbReference type="EC" id="2.4.2.2"/>
    </reaction>
</comment>
<comment type="catalytic activity">
    <reaction evidence="1">
        <text>uridine + phosphate = alpha-D-ribose 1-phosphate + uracil</text>
        <dbReference type="Rhea" id="RHEA:24388"/>
        <dbReference type="ChEBI" id="CHEBI:16704"/>
        <dbReference type="ChEBI" id="CHEBI:17568"/>
        <dbReference type="ChEBI" id="CHEBI:43474"/>
        <dbReference type="ChEBI" id="CHEBI:57720"/>
        <dbReference type="EC" id="2.4.2.2"/>
    </reaction>
</comment>
<comment type="catalytic activity">
    <reaction evidence="1">
        <text>xanthosine + phosphate = alpha-D-ribose 1-phosphate + xanthine</text>
        <dbReference type="Rhea" id="RHEA:27638"/>
        <dbReference type="ChEBI" id="CHEBI:17712"/>
        <dbReference type="ChEBI" id="CHEBI:18107"/>
        <dbReference type="ChEBI" id="CHEBI:43474"/>
        <dbReference type="ChEBI" id="CHEBI:57720"/>
        <dbReference type="EC" id="2.4.2.1"/>
    </reaction>
</comment>
<comment type="similarity">
    <text evidence="1">Belongs to the nucleoside phosphorylase PpnP family.</text>
</comment>
<reference key="1">
    <citation type="journal article" date="2001" name="Nature">
        <title>Genome sequence of enterohaemorrhagic Escherichia coli O157:H7.</title>
        <authorList>
            <person name="Perna N.T."/>
            <person name="Plunkett G. III"/>
            <person name="Burland V."/>
            <person name="Mau B."/>
            <person name="Glasner J.D."/>
            <person name="Rose D.J."/>
            <person name="Mayhew G.F."/>
            <person name="Evans P.S."/>
            <person name="Gregor J."/>
            <person name="Kirkpatrick H.A."/>
            <person name="Posfai G."/>
            <person name="Hackett J."/>
            <person name="Klink S."/>
            <person name="Boutin A."/>
            <person name="Shao Y."/>
            <person name="Miller L."/>
            <person name="Grotbeck E.J."/>
            <person name="Davis N.W."/>
            <person name="Lim A."/>
            <person name="Dimalanta E.T."/>
            <person name="Potamousis K."/>
            <person name="Apodaca J."/>
            <person name="Anantharaman T.S."/>
            <person name="Lin J."/>
            <person name="Yen G."/>
            <person name="Schwartz D.C."/>
            <person name="Welch R.A."/>
            <person name="Blattner F.R."/>
        </authorList>
    </citation>
    <scope>NUCLEOTIDE SEQUENCE [LARGE SCALE GENOMIC DNA]</scope>
    <source>
        <strain>O157:H7 / EDL933 / ATCC 700927 / EHEC</strain>
    </source>
</reference>
<reference key="2">
    <citation type="journal article" date="2001" name="DNA Res.">
        <title>Complete genome sequence of enterohemorrhagic Escherichia coli O157:H7 and genomic comparison with a laboratory strain K-12.</title>
        <authorList>
            <person name="Hayashi T."/>
            <person name="Makino K."/>
            <person name="Ohnishi M."/>
            <person name="Kurokawa K."/>
            <person name="Ishii K."/>
            <person name="Yokoyama K."/>
            <person name="Han C.-G."/>
            <person name="Ohtsubo E."/>
            <person name="Nakayama K."/>
            <person name="Murata T."/>
            <person name="Tanaka M."/>
            <person name="Tobe T."/>
            <person name="Iida T."/>
            <person name="Takami H."/>
            <person name="Honda T."/>
            <person name="Sasakawa C."/>
            <person name="Ogasawara N."/>
            <person name="Yasunaga T."/>
            <person name="Kuhara S."/>
            <person name="Shiba T."/>
            <person name="Hattori M."/>
            <person name="Shinagawa H."/>
        </authorList>
    </citation>
    <scope>NUCLEOTIDE SEQUENCE [LARGE SCALE GENOMIC DNA]</scope>
    <source>
        <strain>O157:H7 / Sakai / RIMD 0509952 / EHEC</strain>
    </source>
</reference>
<accession>P0C039</accession>
<accession>P36768</accession>
<accession>P77343</accession>
<proteinExistence type="inferred from homology"/>
<organism>
    <name type="scientific">Escherichia coli O157:H7</name>
    <dbReference type="NCBI Taxonomy" id="83334"/>
    <lineage>
        <taxon>Bacteria</taxon>
        <taxon>Pseudomonadati</taxon>
        <taxon>Pseudomonadota</taxon>
        <taxon>Gammaproteobacteria</taxon>
        <taxon>Enterobacterales</taxon>
        <taxon>Enterobacteriaceae</taxon>
        <taxon>Escherichia</taxon>
    </lineage>
</organism>
<keyword id="KW-0328">Glycosyltransferase</keyword>
<keyword id="KW-1185">Reference proteome</keyword>
<keyword id="KW-0808">Transferase</keyword>
<sequence>MLQSNEYFSGKVKSIGFSSSSTGRASVGVMVEGEYTFSTAEPEEMTVISGALNVLLPDATDWQVYEAGSVFNVPGHSEFHLQVAEPTSYLCRYL</sequence>
<protein>
    <recommendedName>
        <fullName evidence="1">Pyrimidine/purine nucleoside phosphorylase</fullName>
        <ecNumber evidence="1">2.4.2.1</ecNumber>
        <ecNumber evidence="1">2.4.2.2</ecNumber>
    </recommendedName>
    <alternativeName>
        <fullName evidence="1">Adenosine phosphorylase</fullName>
    </alternativeName>
    <alternativeName>
        <fullName evidence="1">Cytidine phosphorylase</fullName>
    </alternativeName>
    <alternativeName>
        <fullName evidence="1">Guanosine phosphorylase</fullName>
    </alternativeName>
    <alternativeName>
        <fullName evidence="1">Inosine phosphorylase</fullName>
    </alternativeName>
    <alternativeName>
        <fullName evidence="1">Thymidine phosphorylase</fullName>
    </alternativeName>
    <alternativeName>
        <fullName evidence="1">Uridine phosphorylase</fullName>
    </alternativeName>
    <alternativeName>
        <fullName evidence="1">Xanthosine phosphorylase</fullName>
    </alternativeName>
</protein>
<name>PPNP_ECO57</name>
<feature type="chain" id="PRO_0000211765" description="Pyrimidine/purine nucleoside phosphorylase">
    <location>
        <begin position="1"/>
        <end position="94"/>
    </location>
</feature>
<gene>
    <name evidence="1" type="primary">ppnP</name>
    <name type="ordered locus">Z0487</name>
    <name type="ordered locus">ECs0441</name>
</gene>
<evidence type="ECO:0000255" key="1">
    <source>
        <dbReference type="HAMAP-Rule" id="MF_01537"/>
    </source>
</evidence>
<dbReference type="EC" id="2.4.2.1" evidence="1"/>
<dbReference type="EC" id="2.4.2.2" evidence="1"/>
<dbReference type="EMBL" id="AE005174">
    <property type="protein sequence ID" value="AAG54737.1"/>
    <property type="molecule type" value="Genomic_DNA"/>
</dbReference>
<dbReference type="EMBL" id="BA000007">
    <property type="protein sequence ID" value="BAB33864.1"/>
    <property type="molecule type" value="Genomic_DNA"/>
</dbReference>
<dbReference type="PIR" id="A90684">
    <property type="entry name" value="A90684"/>
</dbReference>
<dbReference type="PIR" id="E85534">
    <property type="entry name" value="E85534"/>
</dbReference>
<dbReference type="RefSeq" id="WP_000941942.1">
    <property type="nucleotide sequence ID" value="NZ_VOAI01000005.1"/>
</dbReference>
<dbReference type="SMR" id="P0C039"/>
<dbReference type="STRING" id="155864.Z0487"/>
<dbReference type="GeneID" id="93777070"/>
<dbReference type="KEGG" id="ece:Z0487"/>
<dbReference type="KEGG" id="ecs:ECs_0441"/>
<dbReference type="PATRIC" id="fig|386585.9.peg.537"/>
<dbReference type="eggNOG" id="COG3123">
    <property type="taxonomic scope" value="Bacteria"/>
</dbReference>
<dbReference type="HOGENOM" id="CLU_157874_0_0_6"/>
<dbReference type="OMA" id="ADYCCSY"/>
<dbReference type="Proteomes" id="UP000000558">
    <property type="component" value="Chromosome"/>
</dbReference>
<dbReference type="Proteomes" id="UP000002519">
    <property type="component" value="Chromosome"/>
</dbReference>
<dbReference type="GO" id="GO:0005829">
    <property type="term" value="C:cytosol"/>
    <property type="evidence" value="ECO:0007669"/>
    <property type="project" value="TreeGrafter"/>
</dbReference>
<dbReference type="GO" id="GO:0047975">
    <property type="term" value="F:guanosine phosphorylase activity"/>
    <property type="evidence" value="ECO:0007669"/>
    <property type="project" value="UniProtKB-EC"/>
</dbReference>
<dbReference type="GO" id="GO:0004731">
    <property type="term" value="F:purine-nucleoside phosphorylase activity"/>
    <property type="evidence" value="ECO:0007669"/>
    <property type="project" value="UniProtKB-UniRule"/>
</dbReference>
<dbReference type="GO" id="GO:0009032">
    <property type="term" value="F:thymidine phosphorylase activity"/>
    <property type="evidence" value="ECO:0007669"/>
    <property type="project" value="UniProtKB-EC"/>
</dbReference>
<dbReference type="GO" id="GO:0004850">
    <property type="term" value="F:uridine phosphorylase activity"/>
    <property type="evidence" value="ECO:0007669"/>
    <property type="project" value="UniProtKB-EC"/>
</dbReference>
<dbReference type="CDD" id="cd20296">
    <property type="entry name" value="cupin_PpnP-like"/>
    <property type="match status" value="1"/>
</dbReference>
<dbReference type="FunFam" id="2.60.120.10:FF:000016">
    <property type="entry name" value="Pyrimidine/purine nucleoside phosphorylase"/>
    <property type="match status" value="1"/>
</dbReference>
<dbReference type="Gene3D" id="2.60.120.10">
    <property type="entry name" value="Jelly Rolls"/>
    <property type="match status" value="1"/>
</dbReference>
<dbReference type="HAMAP" id="MF_01537">
    <property type="entry name" value="Nucleos_phosphorylase_PpnP"/>
    <property type="match status" value="1"/>
</dbReference>
<dbReference type="InterPro" id="IPR009664">
    <property type="entry name" value="Ppnp"/>
</dbReference>
<dbReference type="InterPro" id="IPR014710">
    <property type="entry name" value="RmlC-like_jellyroll"/>
</dbReference>
<dbReference type="InterPro" id="IPR011051">
    <property type="entry name" value="RmlC_Cupin_sf"/>
</dbReference>
<dbReference type="NCBIfam" id="NF007875">
    <property type="entry name" value="PRK10579.1"/>
    <property type="match status" value="1"/>
</dbReference>
<dbReference type="PANTHER" id="PTHR36540">
    <property type="entry name" value="PYRIMIDINE/PURINE NUCLEOSIDE PHOSPHORYLASE"/>
    <property type="match status" value="1"/>
</dbReference>
<dbReference type="PANTHER" id="PTHR36540:SF1">
    <property type="entry name" value="PYRIMIDINE_PURINE NUCLEOSIDE PHOSPHORYLASE"/>
    <property type="match status" value="1"/>
</dbReference>
<dbReference type="Pfam" id="PF06865">
    <property type="entry name" value="Ppnp"/>
    <property type="match status" value="1"/>
</dbReference>
<dbReference type="SUPFAM" id="SSF51182">
    <property type="entry name" value="RmlC-like cupins"/>
    <property type="match status" value="1"/>
</dbReference>